<name>URE2_NATPD</name>
<organism>
    <name type="scientific">Natronomonas pharaonis (strain ATCC 35678 / DSM 2160 / CIP 103997 / JCM 8858 / NBRC 14720 / NCIMB 2260 / Gabara)</name>
    <name type="common">Halobacterium pharaonis</name>
    <dbReference type="NCBI Taxonomy" id="348780"/>
    <lineage>
        <taxon>Archaea</taxon>
        <taxon>Methanobacteriati</taxon>
        <taxon>Methanobacteriota</taxon>
        <taxon>Stenosarchaea group</taxon>
        <taxon>Halobacteria</taxon>
        <taxon>Halobacteriales</taxon>
        <taxon>Haloarculaceae</taxon>
        <taxon>Natronomonas</taxon>
    </lineage>
</organism>
<proteinExistence type="inferred from homology"/>
<accession>Q3IRZ6</accession>
<sequence length="132" mass="14144">MSDPSEGSLTPGELLVDDAPVELNAGRETATVTVENTGDRPVQVGSHYHFFETNPALAFDRETAYGMRLNIPAGTAVRFEPGAERDVELVAIGGDRIVHGMDGLVNGDLDDEATRERAMDRAAAAGYRGVER</sequence>
<dbReference type="EC" id="3.5.1.5" evidence="1"/>
<dbReference type="EMBL" id="CR936257">
    <property type="protein sequence ID" value="CAI49095.1"/>
    <property type="molecule type" value="Genomic_DNA"/>
</dbReference>
<dbReference type="RefSeq" id="WP_011322724.1">
    <property type="nucleotide sequence ID" value="NC_007426.1"/>
</dbReference>
<dbReference type="SMR" id="Q3IRZ6"/>
<dbReference type="STRING" id="348780.NP_2008A"/>
<dbReference type="EnsemblBacteria" id="CAI49095">
    <property type="protein sequence ID" value="CAI49095"/>
    <property type="gene ID" value="NP_2008A"/>
</dbReference>
<dbReference type="GeneID" id="3703449"/>
<dbReference type="KEGG" id="nph:NP_2008A"/>
<dbReference type="eggNOG" id="arCOG04527">
    <property type="taxonomic scope" value="Archaea"/>
</dbReference>
<dbReference type="HOGENOM" id="CLU_129707_2_1_2"/>
<dbReference type="OrthoDB" id="2598at2157"/>
<dbReference type="UniPathway" id="UPA00258">
    <property type="reaction ID" value="UER00370"/>
</dbReference>
<dbReference type="Proteomes" id="UP000002698">
    <property type="component" value="Chromosome"/>
</dbReference>
<dbReference type="GO" id="GO:0035550">
    <property type="term" value="C:urease complex"/>
    <property type="evidence" value="ECO:0007669"/>
    <property type="project" value="InterPro"/>
</dbReference>
<dbReference type="GO" id="GO:0009039">
    <property type="term" value="F:urease activity"/>
    <property type="evidence" value="ECO:0007669"/>
    <property type="project" value="UniProtKB-UniRule"/>
</dbReference>
<dbReference type="GO" id="GO:0043419">
    <property type="term" value="P:urea catabolic process"/>
    <property type="evidence" value="ECO:0007669"/>
    <property type="project" value="UniProtKB-UniRule"/>
</dbReference>
<dbReference type="CDD" id="cd00407">
    <property type="entry name" value="Urease_beta"/>
    <property type="match status" value="1"/>
</dbReference>
<dbReference type="FunFam" id="2.10.150.10:FF:000001">
    <property type="entry name" value="Urease subunit beta"/>
    <property type="match status" value="1"/>
</dbReference>
<dbReference type="Gene3D" id="2.10.150.10">
    <property type="entry name" value="Urease, beta subunit"/>
    <property type="match status" value="1"/>
</dbReference>
<dbReference type="HAMAP" id="MF_01954">
    <property type="entry name" value="Urease_beta"/>
    <property type="match status" value="1"/>
</dbReference>
<dbReference type="InterPro" id="IPR002019">
    <property type="entry name" value="Urease_beta-like"/>
</dbReference>
<dbReference type="InterPro" id="IPR036461">
    <property type="entry name" value="Urease_betasu_sf"/>
</dbReference>
<dbReference type="InterPro" id="IPR050069">
    <property type="entry name" value="Urease_subunit"/>
</dbReference>
<dbReference type="NCBIfam" id="NF009682">
    <property type="entry name" value="PRK13203.1"/>
    <property type="match status" value="1"/>
</dbReference>
<dbReference type="NCBIfam" id="TIGR00192">
    <property type="entry name" value="urease_beta"/>
    <property type="match status" value="1"/>
</dbReference>
<dbReference type="PANTHER" id="PTHR33569">
    <property type="entry name" value="UREASE"/>
    <property type="match status" value="1"/>
</dbReference>
<dbReference type="PANTHER" id="PTHR33569:SF1">
    <property type="entry name" value="UREASE"/>
    <property type="match status" value="1"/>
</dbReference>
<dbReference type="Pfam" id="PF00699">
    <property type="entry name" value="Urease_beta"/>
    <property type="match status" value="1"/>
</dbReference>
<dbReference type="SUPFAM" id="SSF51278">
    <property type="entry name" value="Urease, beta-subunit"/>
    <property type="match status" value="1"/>
</dbReference>
<reference key="1">
    <citation type="journal article" date="2005" name="Genome Res.">
        <title>Living with two extremes: conclusions from the genome sequence of Natronomonas pharaonis.</title>
        <authorList>
            <person name="Falb M."/>
            <person name="Pfeiffer F."/>
            <person name="Palm P."/>
            <person name="Rodewald K."/>
            <person name="Hickmann V."/>
            <person name="Tittor J."/>
            <person name="Oesterhelt D."/>
        </authorList>
    </citation>
    <scope>NUCLEOTIDE SEQUENCE [LARGE SCALE GENOMIC DNA]</scope>
    <source>
        <strain>ATCC 35678 / DSM 2160 / CIP 103997 / JCM 8858 / NBRC 14720 / NCIMB 2260 / Gabara</strain>
    </source>
</reference>
<comment type="catalytic activity">
    <reaction evidence="1">
        <text>urea + 2 H2O + H(+) = hydrogencarbonate + 2 NH4(+)</text>
        <dbReference type="Rhea" id="RHEA:20557"/>
        <dbReference type="ChEBI" id="CHEBI:15377"/>
        <dbReference type="ChEBI" id="CHEBI:15378"/>
        <dbReference type="ChEBI" id="CHEBI:16199"/>
        <dbReference type="ChEBI" id="CHEBI:17544"/>
        <dbReference type="ChEBI" id="CHEBI:28938"/>
        <dbReference type="EC" id="3.5.1.5"/>
    </reaction>
</comment>
<comment type="pathway">
    <text evidence="1">Nitrogen metabolism; urea degradation; CO(2) and NH(3) from urea (urease route): step 1/1.</text>
</comment>
<comment type="subunit">
    <text evidence="1">Heterotrimer of UreA (gamma), UreB (beta) and UreC (alpha) subunits. Three heterotrimers associate to form the active enzyme.</text>
</comment>
<comment type="subcellular location">
    <subcellularLocation>
        <location evidence="1">Cytoplasm</location>
    </subcellularLocation>
</comment>
<comment type="similarity">
    <text evidence="1">Belongs to the urease beta subunit family.</text>
</comment>
<feature type="chain" id="PRO_0000234284" description="Urease subunit beta">
    <location>
        <begin position="1"/>
        <end position="132"/>
    </location>
</feature>
<protein>
    <recommendedName>
        <fullName evidence="1">Urease subunit beta</fullName>
        <ecNumber evidence="1">3.5.1.5</ecNumber>
    </recommendedName>
    <alternativeName>
        <fullName evidence="1">Urea amidohydrolase subunit beta</fullName>
    </alternativeName>
</protein>
<gene>
    <name evidence="1" type="primary">ureB</name>
    <name type="ordered locus">NP_2008A</name>
</gene>
<keyword id="KW-0963">Cytoplasm</keyword>
<keyword id="KW-0378">Hydrolase</keyword>
<keyword id="KW-1185">Reference proteome</keyword>
<evidence type="ECO:0000255" key="1">
    <source>
        <dbReference type="HAMAP-Rule" id="MF_01954"/>
    </source>
</evidence>